<comment type="function">
    <text evidence="1">Could be involved in insertion of integral membrane proteins into the membrane.</text>
</comment>
<comment type="subcellular location">
    <subcellularLocation>
        <location evidence="1">Cell membrane</location>
        <topology evidence="1">Peripheral membrane protein</topology>
        <orientation evidence="1">Cytoplasmic side</orientation>
    </subcellularLocation>
</comment>
<comment type="similarity">
    <text evidence="1">Belongs to the UPF0161 family.</text>
</comment>
<proteinExistence type="inferred from homology"/>
<protein>
    <recommendedName>
        <fullName evidence="1">Putative membrane protein insertion efficiency factor</fullName>
    </recommendedName>
</protein>
<reference key="1">
    <citation type="journal article" date="2002" name="Lancet">
        <title>Genome and virulence determinants of high virulence community-acquired MRSA.</title>
        <authorList>
            <person name="Baba T."/>
            <person name="Takeuchi F."/>
            <person name="Kuroda M."/>
            <person name="Yuzawa H."/>
            <person name="Aoki K."/>
            <person name="Oguchi A."/>
            <person name="Nagai Y."/>
            <person name="Iwama N."/>
            <person name="Asano K."/>
            <person name="Naimi T."/>
            <person name="Kuroda H."/>
            <person name="Cui L."/>
            <person name="Yamamoto K."/>
            <person name="Hiramatsu K."/>
        </authorList>
    </citation>
    <scope>NUCLEOTIDE SEQUENCE [LARGE SCALE GENOMIC DNA]</scope>
    <source>
        <strain>MW2</strain>
    </source>
</reference>
<organism>
    <name type="scientific">Staphylococcus aureus (strain MW2)</name>
    <dbReference type="NCBI Taxonomy" id="196620"/>
    <lineage>
        <taxon>Bacteria</taxon>
        <taxon>Bacillati</taxon>
        <taxon>Bacillota</taxon>
        <taxon>Bacilli</taxon>
        <taxon>Bacillales</taxon>
        <taxon>Staphylococcaceae</taxon>
        <taxon>Staphylococcus</taxon>
    </lineage>
</organism>
<feature type="chain" id="PRO_0000171871" description="Putative membrane protein insertion efficiency factor">
    <location>
        <begin position="1"/>
        <end position="85"/>
    </location>
</feature>
<feature type="region of interest" description="Disordered" evidence="2">
    <location>
        <begin position="62"/>
        <end position="85"/>
    </location>
</feature>
<accession>P67306</accession>
<accession>Q99T75</accession>
<keyword id="KW-1003">Cell membrane</keyword>
<keyword id="KW-0472">Membrane</keyword>
<evidence type="ECO:0000255" key="1">
    <source>
        <dbReference type="HAMAP-Rule" id="MF_00386"/>
    </source>
</evidence>
<evidence type="ECO:0000256" key="2">
    <source>
        <dbReference type="SAM" id="MobiDB-lite"/>
    </source>
</evidence>
<gene>
    <name type="ordered locus">MW1733</name>
</gene>
<name>YIDD_STAAW</name>
<sequence>MKKIFLAMIHFYQRFISPLTPPTCRFYPTCSEYTREAIQYHGAFKGLYLGIRRILKCHPLHKGGFDPVPLKKDKSASKHSHKHNH</sequence>
<dbReference type="EMBL" id="BA000033">
    <property type="protein sequence ID" value="BAB95598.1"/>
    <property type="molecule type" value="Genomic_DNA"/>
</dbReference>
<dbReference type="KEGG" id="sam:MW1733"/>
<dbReference type="HOGENOM" id="CLU_144811_6_0_9"/>
<dbReference type="GO" id="GO:0005886">
    <property type="term" value="C:plasma membrane"/>
    <property type="evidence" value="ECO:0007669"/>
    <property type="project" value="UniProtKB-SubCell"/>
</dbReference>
<dbReference type="HAMAP" id="MF_00386">
    <property type="entry name" value="UPF0161_YidD"/>
    <property type="match status" value="1"/>
</dbReference>
<dbReference type="InterPro" id="IPR002696">
    <property type="entry name" value="Membr_insert_effic_factor_YidD"/>
</dbReference>
<dbReference type="NCBIfam" id="TIGR00278">
    <property type="entry name" value="membrane protein insertion efficiency factor YidD"/>
    <property type="match status" value="1"/>
</dbReference>
<dbReference type="PANTHER" id="PTHR33383">
    <property type="entry name" value="MEMBRANE PROTEIN INSERTION EFFICIENCY FACTOR-RELATED"/>
    <property type="match status" value="1"/>
</dbReference>
<dbReference type="PANTHER" id="PTHR33383:SF1">
    <property type="entry name" value="MEMBRANE PROTEIN INSERTION EFFICIENCY FACTOR-RELATED"/>
    <property type="match status" value="1"/>
</dbReference>
<dbReference type="Pfam" id="PF01809">
    <property type="entry name" value="YidD"/>
    <property type="match status" value="1"/>
</dbReference>
<dbReference type="SMART" id="SM01234">
    <property type="entry name" value="Haemolytic"/>
    <property type="match status" value="1"/>
</dbReference>